<sequence length="1832" mass="202677">MAATVYRPATAPIADAPCEGLVCLELEDGSAYQGYSFGAPKSIAGELVFQTGMVGYPESVTDPSYRGQILVITFPLVGNYGVPSRETVDDLLKDLPAHFESNQIHIAGLVTASYAGEDFSHFLATSSLGTWLKEQGIPAMYGVDTRALTKRIREKGSMLGRMLLQKEDLAVSAPSLGVPGDWKPHFETIEWVNPNEKNLVAEVSIKEPKLYKPDEATALKHPSGRNLRILCLDVGMKYNQLRCFIKRGVEVLVCPWDYDFSKEEYDGLFISNGPGDPKVMDTTVEHISAALQKNNTPIFGICLGHQLLARAAGAKTVKLKFGNRGHNIPCTSMVTGKCHITSQNHGYAVDATTLPTGWQELFINANDGSNEGIMHVDRPHFSVQFHPESTPGPRDTEFLFDVFIQTVAKCTTDNTLLQKGVEFPGGTTEENERLHPRVDVKKVLVLGSGGLSIGQAGEFDYSGSQAIKALKEEGIYTVLINPNIATIQTSKGLADKVYFLPVNAEFVRKVIKYEQPDAIYCTFGGQTALSVGIQLKDEFEALGVKVLGTPIDTIITTEDRELFARSMESIGEKCAKSASASSVEEALNAVKDIGYPVIVRAAYALGGLGSGFANNEAELVDLCNKALAASPQVLVERSMKGWKEIEYEVVRDAQDNCITVCNMENFDPLGIHTGDSIVVAPSQTLSDEDYNMLRTTAVNVIRHLGVVGECNIQYALNPFSREYCIIEVNARLSRSSALASKATGYPLAFIAAKLGLGIPLKEIKNTVTKVTCACFEPSLDYVVVKMPRWDLKKFTRVSTQLGSSMKSVGEVMSIGRTFEEAIQKAIRAIDFHNLGFSESKGALMSVDDELQTPSDQRLFAIANAMHAGYTVDRIWELTKIDKWFLSKLKGLSNFAKDMTKLTANDVVGRPDLLLRAKQLGFCDRQLANFWDSNELAIRRMRLEAGITPFVKQIDTVAAEFPAFTNYLYLTYNASEHDVSFEDRGVMVLGSGVYRIGSSVEFDWCSVRAIRTLRESGFKTIMVNYNPETVSTDYDEADKLYFENINLETVLDVYQMEDATGVLGAMGGQTPNNIALPLLRAGVRVLGTSPEMIDTAENRYKFSRMLDRIGVDQPTWKELTSFDEAKAFCQKVSYPVLVRPSYVLSGAAMNTVYSEADLESYLQQAADVSPEHPVVITKYIENAKEIEMDAVAKDGKVVGHFISEHVENAGVHSGDATLILPPQDLEQTTIQRIEEATRKIGAALNVTGPFNIQFIAKDNDIKVIECNVRASRSFPFVSKVMGVDLIEMATKAIMGLPFVEYPAIDRPSGGVGVKVPQFSFSRLSGADPVLGVEMASTGEVASFGVDKYEAYLKALMSTGFKVPKKNILLSIGSYKDKKEMLPSVAKLSQMGYKLFATAGTADFLQEHDIPVQFLEVLAKEDDQKSEYSLTQHLANNMIDLYINLPSNNRYRRPANYISKGYQTRRMAVDYQIPLVTNVKNAKILVEAIARYRDMEIGERDYQTSHTPLQLSGQVNFTLQDSLSRPHSFKKAHVLSVEQYTRADLHLLFTVAEEMRLSVQRGNVMDILKGRMLATLFYEPSTRTSASFEAAMKRLGGEVISIATQHSSVQKGETLQDTLRTLACYADAIVLRHPDETCVDVAKKYSPVPVVNAGNGSREHPTQAFLDLFTVREELGTVQGLTFTFVGDLRYGRPVHSLVYLLRHYSGVKVQLVSPKGLELPTDVRQQLVKAGQLLCESETLTPEILGKTDVLYCTRVQKERFPSEAEYEKVKGSYRIDNQTLKHAKSKMAIMHPLPRNEEIAEEVDFDQRAAYFRQMRYGLYCRMALLALVMSG</sequence>
<gene>
    <name type="primary">pyr-3</name>
    <name type="ORF">NCU08287</name>
</gene>
<evidence type="ECO:0000250" key="1">
    <source>
        <dbReference type="UniProtKB" id="P00968"/>
    </source>
</evidence>
<evidence type="ECO:0000250" key="2">
    <source>
        <dbReference type="UniProtKB" id="P07259"/>
    </source>
</evidence>
<evidence type="ECO:0000250" key="3">
    <source>
        <dbReference type="UniProtKB" id="P08955"/>
    </source>
</evidence>
<evidence type="ECO:0000250" key="4">
    <source>
        <dbReference type="UniProtKB" id="P0A6F1"/>
    </source>
</evidence>
<evidence type="ECO:0000250" key="5">
    <source>
        <dbReference type="UniProtKB" id="P0A786"/>
    </source>
</evidence>
<evidence type="ECO:0000255" key="6">
    <source>
        <dbReference type="PROSITE-ProRule" id="PRU00409"/>
    </source>
</evidence>
<evidence type="ECO:0000255" key="7">
    <source>
        <dbReference type="PROSITE-ProRule" id="PRU00605"/>
    </source>
</evidence>
<evidence type="ECO:0000255" key="8">
    <source>
        <dbReference type="PROSITE-ProRule" id="PRU01202"/>
    </source>
</evidence>
<evidence type="ECO:0000269" key="9">
    <source>
    </source>
</evidence>
<evidence type="ECO:0000269" key="10">
    <source>
    </source>
</evidence>
<evidence type="ECO:0000269" key="11">
    <source>
    </source>
</evidence>
<evidence type="ECO:0000269" key="12">
    <source>
    </source>
</evidence>
<evidence type="ECO:0000269" key="13">
    <source>
    </source>
</evidence>
<evidence type="ECO:0000269" key="14">
    <source>
    </source>
</evidence>
<evidence type="ECO:0000305" key="15"/>
<evidence type="ECO:0000305" key="16">
    <source>
    </source>
</evidence>
<evidence type="ECO:0000305" key="17">
    <source>
    </source>
</evidence>
<evidence type="ECO:0000305" key="18">
    <source>
    </source>
</evidence>
<evidence type="ECO:0000305" key="19">
    <source>
    </source>
</evidence>
<evidence type="ECO:0000305" key="20">
    <source>
    </source>
</evidence>
<evidence type="ECO:0000305" key="21">
    <source>
    </source>
</evidence>
<name>PYR1_NEUCR</name>
<accession>Q7S8A6</accession>
<keyword id="KW-0067">ATP-binding</keyword>
<keyword id="KW-0963">Cytoplasm</keyword>
<keyword id="KW-0315">Glutamine amidotransferase</keyword>
<keyword id="KW-0378">Hydrolase</keyword>
<keyword id="KW-0436">Ligase</keyword>
<keyword id="KW-0464">Manganese</keyword>
<keyword id="KW-0479">Metal-binding</keyword>
<keyword id="KW-0511">Multifunctional enzyme</keyword>
<keyword id="KW-0547">Nucleotide-binding</keyword>
<keyword id="KW-0539">Nucleus</keyword>
<keyword id="KW-0665">Pyrimidine biosynthesis</keyword>
<keyword id="KW-1185">Reference proteome</keyword>
<keyword id="KW-0677">Repeat</keyword>
<keyword id="KW-0808">Transferase</keyword>
<feature type="chain" id="PRO_0000459176" description="Multifunctional protein pyr-3">
    <location>
        <begin position="1"/>
        <end position="1832"/>
    </location>
</feature>
<feature type="domain" description="Glutamine amidotransferase type-1" evidence="7">
    <location>
        <begin position="228"/>
        <end position="413"/>
    </location>
</feature>
<feature type="domain" description="ATP-grasp 1" evidence="6">
    <location>
        <begin position="564"/>
        <end position="756"/>
    </location>
</feature>
<feature type="domain" description="ATP-grasp 2" evidence="6">
    <location>
        <begin position="1102"/>
        <end position="1293"/>
    </location>
</feature>
<feature type="domain" description="MGS-like" evidence="8">
    <location>
        <begin position="1359"/>
        <end position="1507"/>
    </location>
</feature>
<feature type="region of interest" description="GATase (Glutamine amidotransferase)" evidence="3">
    <location>
        <begin position="2"/>
        <end position="400"/>
    </location>
</feature>
<feature type="region of interest" description="Linker" evidence="3">
    <location>
        <begin position="401"/>
        <end position="442"/>
    </location>
</feature>
<feature type="region of interest" description="CPSase (Carbamoyl phosphate synthase)" evidence="3">
    <location>
        <begin position="443"/>
        <end position="1484"/>
    </location>
</feature>
<feature type="region of interest" description="CPSase A" evidence="3">
    <location>
        <begin position="443"/>
        <end position="983"/>
    </location>
</feature>
<feature type="region of interest" description="CPSase B" evidence="3">
    <location>
        <begin position="984"/>
        <end position="1484"/>
    </location>
</feature>
<feature type="region of interest" description="Linker" evidence="3">
    <location>
        <begin position="1485"/>
        <end position="1528"/>
    </location>
</feature>
<feature type="region of interest" description="ATCase (Aspartate transcarbamylase)" evidence="3">
    <location>
        <begin position="1529"/>
        <end position="1832"/>
    </location>
</feature>
<feature type="active site" description="Nucleophile; for GATase activity" evidence="7">
    <location>
        <position position="302"/>
    </location>
</feature>
<feature type="active site" description="For GATase activity" evidence="7">
    <location>
        <position position="386"/>
    </location>
</feature>
<feature type="active site" description="For GATase activity" evidence="7">
    <location>
        <position position="388"/>
    </location>
</feature>
<feature type="binding site" evidence="4">
    <location>
        <position position="64"/>
    </location>
    <ligand>
        <name>L-glutamine</name>
        <dbReference type="ChEBI" id="CHEBI:58359"/>
    </ligand>
</feature>
<feature type="binding site" evidence="4">
    <location>
        <position position="273"/>
    </location>
    <ligand>
        <name>L-glutamine</name>
        <dbReference type="ChEBI" id="CHEBI:58359"/>
    </ligand>
</feature>
<feature type="binding site" evidence="4">
    <location>
        <position position="275"/>
    </location>
    <ligand>
        <name>L-glutamine</name>
        <dbReference type="ChEBI" id="CHEBI:58359"/>
    </ligand>
</feature>
<feature type="binding site" evidence="4">
    <location>
        <position position="303"/>
    </location>
    <ligand>
        <name>L-glutamine</name>
        <dbReference type="ChEBI" id="CHEBI:58359"/>
    </ligand>
</feature>
<feature type="binding site" evidence="4">
    <location>
        <position position="306"/>
    </location>
    <ligand>
        <name>L-glutamine</name>
        <dbReference type="ChEBI" id="CHEBI:58359"/>
    </ligand>
</feature>
<feature type="binding site" evidence="4">
    <location>
        <position position="344"/>
    </location>
    <ligand>
        <name>L-glutamine</name>
        <dbReference type="ChEBI" id="CHEBI:58359"/>
    </ligand>
</feature>
<feature type="binding site" evidence="4">
    <location>
        <position position="346"/>
    </location>
    <ligand>
        <name>L-glutamine</name>
        <dbReference type="ChEBI" id="CHEBI:58359"/>
    </ligand>
</feature>
<feature type="binding site" evidence="4">
    <location>
        <position position="347"/>
    </location>
    <ligand>
        <name>L-glutamine</name>
        <dbReference type="ChEBI" id="CHEBI:58359"/>
    </ligand>
</feature>
<feature type="binding site" evidence="1">
    <location>
        <position position="560"/>
    </location>
    <ligand>
        <name>ATP</name>
        <dbReference type="ChEBI" id="CHEBI:30616"/>
        <label>1</label>
    </ligand>
</feature>
<feature type="binding site" evidence="1">
    <location>
        <position position="600"/>
    </location>
    <ligand>
        <name>ATP</name>
        <dbReference type="ChEBI" id="CHEBI:30616"/>
        <label>1</label>
    </ligand>
</feature>
<feature type="binding site" evidence="1">
    <location>
        <position position="606"/>
    </location>
    <ligand>
        <name>ATP</name>
        <dbReference type="ChEBI" id="CHEBI:30616"/>
        <label>1</label>
    </ligand>
</feature>
<feature type="binding site" evidence="1">
    <location>
        <position position="607"/>
    </location>
    <ligand>
        <name>ATP</name>
        <dbReference type="ChEBI" id="CHEBI:30616"/>
        <label>1</label>
    </ligand>
</feature>
<feature type="binding site" evidence="1">
    <location>
        <position position="637"/>
    </location>
    <ligand>
        <name>ATP</name>
        <dbReference type="ChEBI" id="CHEBI:30616"/>
        <label>1</label>
    </ligand>
</feature>
<feature type="binding site" evidence="1">
    <location>
        <position position="639"/>
    </location>
    <ligand>
        <name>ATP</name>
        <dbReference type="ChEBI" id="CHEBI:30616"/>
        <label>1</label>
    </ligand>
</feature>
<feature type="binding site" evidence="1">
    <location>
        <position position="644"/>
    </location>
    <ligand>
        <name>ATP</name>
        <dbReference type="ChEBI" id="CHEBI:30616"/>
        <label>1</label>
    </ligand>
</feature>
<feature type="binding site" evidence="1">
    <location>
        <position position="670"/>
    </location>
    <ligand>
        <name>ATP</name>
        <dbReference type="ChEBI" id="CHEBI:30616"/>
        <label>1</label>
    </ligand>
</feature>
<feature type="binding site" evidence="1">
    <location>
        <position position="671"/>
    </location>
    <ligand>
        <name>ATP</name>
        <dbReference type="ChEBI" id="CHEBI:30616"/>
        <label>1</label>
    </ligand>
</feature>
<feature type="binding site" evidence="1">
    <location>
        <position position="672"/>
    </location>
    <ligand>
        <name>ATP</name>
        <dbReference type="ChEBI" id="CHEBI:30616"/>
        <label>1</label>
    </ligand>
</feature>
<feature type="binding site" evidence="1">
    <location>
        <position position="713"/>
    </location>
    <ligand>
        <name>ATP</name>
        <dbReference type="ChEBI" id="CHEBI:30616"/>
        <label>1</label>
    </ligand>
</feature>
<feature type="binding site" evidence="6">
    <location>
        <position position="713"/>
    </location>
    <ligand>
        <name>Mg(2+)</name>
        <dbReference type="ChEBI" id="CHEBI:18420"/>
        <label>1</label>
    </ligand>
</feature>
<feature type="binding site" evidence="6">
    <location>
        <position position="713"/>
    </location>
    <ligand>
        <name>Mn(2+)</name>
        <dbReference type="ChEBI" id="CHEBI:29035"/>
        <label>1</label>
    </ligand>
</feature>
<feature type="binding site" evidence="1">
    <location>
        <position position="727"/>
    </location>
    <ligand>
        <name>ATP</name>
        <dbReference type="ChEBI" id="CHEBI:30616"/>
        <label>1</label>
    </ligand>
</feature>
<feature type="binding site" evidence="6">
    <location>
        <position position="727"/>
    </location>
    <ligand>
        <name>Mg(2+)</name>
        <dbReference type="ChEBI" id="CHEBI:18420"/>
        <label>1</label>
    </ligand>
</feature>
<feature type="binding site" evidence="6">
    <location>
        <position position="727"/>
    </location>
    <ligand>
        <name>Mg(2+)</name>
        <dbReference type="ChEBI" id="CHEBI:18420"/>
        <label>2</label>
    </ligand>
</feature>
<feature type="binding site" evidence="6">
    <location>
        <position position="727"/>
    </location>
    <ligand>
        <name>Mn(2+)</name>
        <dbReference type="ChEBI" id="CHEBI:29035"/>
        <label>1</label>
    </ligand>
</feature>
<feature type="binding site" evidence="6">
    <location>
        <position position="727"/>
    </location>
    <ligand>
        <name>Mn(2+)</name>
        <dbReference type="ChEBI" id="CHEBI:29035"/>
        <label>2</label>
    </ligand>
</feature>
<feature type="binding site" evidence="6">
    <location>
        <position position="729"/>
    </location>
    <ligand>
        <name>Mg(2+)</name>
        <dbReference type="ChEBI" id="CHEBI:18420"/>
        <label>2</label>
    </ligand>
</feature>
<feature type="binding site" evidence="6">
    <location>
        <position position="729"/>
    </location>
    <ligand>
        <name>Mn(2+)</name>
        <dbReference type="ChEBI" id="CHEBI:29035"/>
        <label>2</label>
    </ligand>
</feature>
<feature type="binding site" evidence="1">
    <location>
        <position position="1138"/>
    </location>
    <ligand>
        <name>ATP</name>
        <dbReference type="ChEBI" id="CHEBI:30616"/>
        <label>2</label>
    </ligand>
</feature>
<feature type="binding site" evidence="1">
    <location>
        <position position="1177"/>
    </location>
    <ligand>
        <name>ATP</name>
        <dbReference type="ChEBI" id="CHEBI:30616"/>
        <label>2</label>
    </ligand>
</feature>
<feature type="binding site" evidence="1">
    <location>
        <position position="1179"/>
    </location>
    <ligand>
        <name>ATP</name>
        <dbReference type="ChEBI" id="CHEBI:30616"/>
        <label>2</label>
    </ligand>
</feature>
<feature type="binding site" evidence="1">
    <location>
        <position position="1184"/>
    </location>
    <ligand>
        <name>ATP</name>
        <dbReference type="ChEBI" id="CHEBI:30616"/>
        <label>2</label>
    </ligand>
</feature>
<feature type="binding site" evidence="1">
    <location>
        <position position="1209"/>
    </location>
    <ligand>
        <name>ATP</name>
        <dbReference type="ChEBI" id="CHEBI:30616"/>
        <label>2</label>
    </ligand>
</feature>
<feature type="binding site" evidence="1">
    <location>
        <position position="1210"/>
    </location>
    <ligand>
        <name>ATP</name>
        <dbReference type="ChEBI" id="CHEBI:30616"/>
        <label>2</label>
    </ligand>
</feature>
<feature type="binding site" evidence="1">
    <location>
        <position position="1211"/>
    </location>
    <ligand>
        <name>ATP</name>
        <dbReference type="ChEBI" id="CHEBI:30616"/>
        <label>2</label>
    </ligand>
</feature>
<feature type="binding site" evidence="1">
    <location>
        <position position="1212"/>
    </location>
    <ligand>
        <name>ATP</name>
        <dbReference type="ChEBI" id="CHEBI:30616"/>
        <label>2</label>
    </ligand>
</feature>
<feature type="binding site" evidence="1">
    <location>
        <position position="1252"/>
    </location>
    <ligand>
        <name>ATP</name>
        <dbReference type="ChEBI" id="CHEBI:30616"/>
        <label>2</label>
    </ligand>
</feature>
<feature type="binding site" evidence="6">
    <location>
        <position position="1252"/>
    </location>
    <ligand>
        <name>Mg(2+)</name>
        <dbReference type="ChEBI" id="CHEBI:18420"/>
        <label>3</label>
    </ligand>
</feature>
<feature type="binding site" evidence="6">
    <location>
        <position position="1252"/>
    </location>
    <ligand>
        <name>Mn(2+)</name>
        <dbReference type="ChEBI" id="CHEBI:29035"/>
        <label>3</label>
    </ligand>
</feature>
<feature type="binding site" evidence="1">
    <location>
        <position position="1264"/>
    </location>
    <ligand>
        <name>ATP</name>
        <dbReference type="ChEBI" id="CHEBI:30616"/>
        <label>2</label>
    </ligand>
</feature>
<feature type="binding site" evidence="6">
    <location>
        <position position="1264"/>
    </location>
    <ligand>
        <name>Mg(2+)</name>
        <dbReference type="ChEBI" id="CHEBI:18420"/>
        <label>3</label>
    </ligand>
</feature>
<feature type="binding site" evidence="6">
    <location>
        <position position="1264"/>
    </location>
    <ligand>
        <name>Mg(2+)</name>
        <dbReference type="ChEBI" id="CHEBI:18420"/>
        <label>4</label>
    </ligand>
</feature>
<feature type="binding site" evidence="6">
    <location>
        <position position="1264"/>
    </location>
    <ligand>
        <name>Mn(2+)</name>
        <dbReference type="ChEBI" id="CHEBI:29035"/>
        <label>3</label>
    </ligand>
</feature>
<feature type="binding site" evidence="6">
    <location>
        <position position="1264"/>
    </location>
    <ligand>
        <name>Mn(2+)</name>
        <dbReference type="ChEBI" id="CHEBI:29035"/>
        <label>4</label>
    </ligand>
</feature>
<feature type="binding site" evidence="6">
    <location>
        <position position="1266"/>
    </location>
    <ligand>
        <name>Mg(2+)</name>
        <dbReference type="ChEBI" id="CHEBI:18420"/>
        <label>4</label>
    </ligand>
</feature>
<feature type="binding site" evidence="6">
    <location>
        <position position="1266"/>
    </location>
    <ligand>
        <name>Mn(2+)</name>
        <dbReference type="ChEBI" id="CHEBI:29035"/>
        <label>4</label>
    </ligand>
</feature>
<feature type="binding site" evidence="5">
    <location>
        <position position="1581"/>
    </location>
    <ligand>
        <name>carbamoyl phosphate</name>
        <dbReference type="ChEBI" id="CHEBI:58228"/>
    </ligand>
</feature>
<feature type="binding site" evidence="5">
    <location>
        <position position="1582"/>
    </location>
    <ligand>
        <name>carbamoyl phosphate</name>
        <dbReference type="ChEBI" id="CHEBI:58228"/>
    </ligand>
</feature>
<feature type="binding site" evidence="5">
    <location>
        <position position="1609"/>
    </location>
    <ligand>
        <name>L-aspartate</name>
        <dbReference type="ChEBI" id="CHEBI:29991"/>
    </ligand>
</feature>
<feature type="binding site" evidence="5">
    <location>
        <position position="1630"/>
    </location>
    <ligand>
        <name>carbamoyl phosphate</name>
        <dbReference type="ChEBI" id="CHEBI:58228"/>
    </ligand>
</feature>
<feature type="binding site" evidence="5">
    <location>
        <position position="1658"/>
    </location>
    <ligand>
        <name>carbamoyl phosphate</name>
        <dbReference type="ChEBI" id="CHEBI:58228"/>
    </ligand>
</feature>
<feature type="binding site" evidence="5">
    <location>
        <position position="1661"/>
    </location>
    <ligand>
        <name>carbamoyl phosphate</name>
        <dbReference type="ChEBI" id="CHEBI:58228"/>
    </ligand>
</feature>
<feature type="binding site" evidence="5">
    <location>
        <position position="1691"/>
    </location>
    <ligand>
        <name>L-aspartate</name>
        <dbReference type="ChEBI" id="CHEBI:29991"/>
    </ligand>
</feature>
<feature type="binding site" evidence="5">
    <location>
        <position position="1754"/>
    </location>
    <ligand>
        <name>L-aspartate</name>
        <dbReference type="ChEBI" id="CHEBI:29991"/>
    </ligand>
</feature>
<feature type="binding site" evidence="5">
    <location>
        <position position="1793"/>
    </location>
    <ligand>
        <name>carbamoyl phosphate</name>
        <dbReference type="ChEBI" id="CHEBI:58228"/>
    </ligand>
</feature>
<feature type="binding site" evidence="5">
    <location>
        <position position="1794"/>
    </location>
    <ligand>
        <name>carbamoyl phosphate</name>
        <dbReference type="ChEBI" id="CHEBI:58228"/>
    </ligand>
</feature>
<comment type="function">
    <text evidence="10 11 12 14">Multifunctional protein that encodes the first 2 enzymatic activities of the de novo pyrimidine pathway: carbamoylphosphate synthetase (CPSase; EC 6.3.5.5) and aspartate transcarbamylase (ATCase; EC 2.1.3.2). The CPSase-function is accomplished in 2 steps, by a glutamine-dependent amidotransferase activity (GATase) that binds and cleaves glutamine to produce ammonia, followed by an ammonium-dependent carbamoyl phosphate synthetase, which reacts with the ammonia, hydrogencarbonate and ATP to form carbamoyl phosphate. The endogenously produced carbamoyl phosphate is sequestered and channeled to the ATCase active site. ATCase then catalyzes the formation of carbamoyl-L-aspartate from L-aspartate and carbamoyl phosphate.</text>
</comment>
<comment type="catalytic activity">
    <reaction evidence="9 12 13">
        <text>hydrogencarbonate + L-glutamine + 2 ATP + H2O = carbamoyl phosphate + L-glutamate + 2 ADP + phosphate + 2 H(+)</text>
        <dbReference type="Rhea" id="RHEA:18633"/>
        <dbReference type="ChEBI" id="CHEBI:15377"/>
        <dbReference type="ChEBI" id="CHEBI:15378"/>
        <dbReference type="ChEBI" id="CHEBI:17544"/>
        <dbReference type="ChEBI" id="CHEBI:29985"/>
        <dbReference type="ChEBI" id="CHEBI:30616"/>
        <dbReference type="ChEBI" id="CHEBI:43474"/>
        <dbReference type="ChEBI" id="CHEBI:58228"/>
        <dbReference type="ChEBI" id="CHEBI:58359"/>
        <dbReference type="ChEBI" id="CHEBI:456216"/>
        <dbReference type="EC" id="6.3.5.5"/>
    </reaction>
</comment>
<comment type="catalytic activity">
    <reaction evidence="16 20">
        <text>L-glutamine + H2O = L-glutamate + NH4(+)</text>
        <dbReference type="Rhea" id="RHEA:15889"/>
        <dbReference type="ChEBI" id="CHEBI:15377"/>
        <dbReference type="ChEBI" id="CHEBI:28938"/>
        <dbReference type="ChEBI" id="CHEBI:29985"/>
        <dbReference type="ChEBI" id="CHEBI:58359"/>
        <dbReference type="EC" id="3.5.1.2"/>
    </reaction>
</comment>
<comment type="catalytic activity">
    <reaction evidence="9 12">
        <text>hydrogencarbonate + NH4(+) + 2 ATP = carbamoyl phosphate + 2 ADP + phosphate + 2 H(+)</text>
        <dbReference type="Rhea" id="RHEA:18029"/>
        <dbReference type="ChEBI" id="CHEBI:15378"/>
        <dbReference type="ChEBI" id="CHEBI:17544"/>
        <dbReference type="ChEBI" id="CHEBI:28938"/>
        <dbReference type="ChEBI" id="CHEBI:30616"/>
        <dbReference type="ChEBI" id="CHEBI:43474"/>
        <dbReference type="ChEBI" id="CHEBI:58228"/>
        <dbReference type="ChEBI" id="CHEBI:456216"/>
        <dbReference type="EC" id="6.3.4.16"/>
    </reaction>
</comment>
<comment type="catalytic activity">
    <reaction evidence="12 13">
        <text>carbamoyl phosphate + L-aspartate = N-carbamoyl-L-aspartate + phosphate + H(+)</text>
        <dbReference type="Rhea" id="RHEA:20013"/>
        <dbReference type="ChEBI" id="CHEBI:15378"/>
        <dbReference type="ChEBI" id="CHEBI:29991"/>
        <dbReference type="ChEBI" id="CHEBI:32814"/>
        <dbReference type="ChEBI" id="CHEBI:43474"/>
        <dbReference type="ChEBI" id="CHEBI:58228"/>
        <dbReference type="EC" id="2.1.3.2"/>
    </reaction>
</comment>
<comment type="cofactor">
    <cofactor evidence="6">
        <name>Mg(2+)</name>
        <dbReference type="ChEBI" id="CHEBI:18420"/>
    </cofactor>
    <cofactor evidence="6">
        <name>Mn(2+)</name>
        <dbReference type="ChEBI" id="CHEBI:29035"/>
    </cofactor>
    <text evidence="6">Binds 4 Mg(2+) or Mn(2+) ions per subunit.</text>
</comment>
<comment type="activity regulation">
    <text evidence="12">Both CPSase and ATCase activities are feedback inhibited by the end product UTP.</text>
</comment>
<comment type="biophysicochemical properties">
    <phDependence>
        <text evidence="12">Optimum pH is 7.5.</text>
    </phDependence>
</comment>
<comment type="pathway">
    <text evidence="15">Pyrimidine metabolism; UMP biosynthesis via de novo pathway; (S)-dihydroorotate from bicarbonate: step 1/3.</text>
</comment>
<comment type="pathway">
    <text evidence="15">Pyrimidine metabolism; UMP biosynthesis via de novo pathway; (S)-dihydroorotate from bicarbonate: step 2/3.</text>
</comment>
<comment type="subcellular location">
    <subcellularLocation>
        <location evidence="17">Cytoplasm</location>
    </subcellularLocation>
    <subcellularLocation>
        <location evidence="17">Nucleus</location>
    </subcellularLocation>
</comment>
<comment type="induction">
    <text evidence="12">Repressed by pyrimidines.</text>
</comment>
<comment type="domain">
    <text evidence="19">The DHOase domain is defective. The third step of the de novo pyrimidine pathway, dihydroorotase (DHOase) is encoded by the pyr-6 gene which is both physically and genetically independent of the pyr-3 gene.</text>
</comment>
<comment type="miscellaneous">
    <text evidence="2">GATase (glutamine amidotransferase) and CPSase (carbamoyl phosphate synthase) form together the glutamine-dependent CPSase (CPSase P) (EC 6.3.5.5).</text>
</comment>
<comment type="miscellaneous">
    <text evidence="18 21">In N.crassa, this enzyme is synthesized by 2 pathway-specific (arginine and pyrimidine) genes under separate control. One is linked to the arginine pathway and is designated CPSase A (arg-2 and arg-3), it is localized to mitochondria and repressed by arginine. A second one, CPSase P, is part of a multifunctional protein (pyr-3) encoding 3 enzymatic activities of the pyrimidine pathway (GATase, CPSase, and ATCase); it is localized to the cytoplasm and feedback inhibited and repressed by pyrimidines. The carbamoyl phosphate synthesized by each synthase is channeled to its respective pathway, in contrast to Saccharomyces cerevisiae, in which the 2 synthases are localized to the cytoplasm and appear to contribute to the formation of a single cellular pool of carbamoyl phosphate.</text>
</comment>
<comment type="similarity">
    <text evidence="15">In the N-terminal section; belongs to the CarA family.</text>
</comment>
<comment type="similarity">
    <text evidence="15">In the central section; belongs to the CarB family.</text>
</comment>
<comment type="similarity">
    <text evidence="15">In the C-terminal section; belongs to the aspartate/ornithine carbamoyltransferase superfamily. ATCase family.</text>
</comment>
<dbReference type="EC" id="6.3.5.5"/>
<dbReference type="EC" id="3.5.1.2"/>
<dbReference type="EC" id="6.3.4.16"/>
<dbReference type="EC" id="2.1.3.2"/>
<dbReference type="EMBL" id="CM002239">
    <property type="protein sequence ID" value="EAA32577.1"/>
    <property type="molecule type" value="Genomic_DNA"/>
</dbReference>
<dbReference type="RefSeq" id="XP_961813.1">
    <property type="nucleotide sequence ID" value="XM_956720.2"/>
</dbReference>
<dbReference type="SMR" id="Q7S8A6"/>
<dbReference type="FunCoup" id="Q7S8A6">
    <property type="interactions" value="1505"/>
</dbReference>
<dbReference type="STRING" id="367110.Q7S8A6"/>
<dbReference type="PaxDb" id="5141-EFNCRP00000008441"/>
<dbReference type="EnsemblFungi" id="EAA32577">
    <property type="protein sequence ID" value="EAA32577"/>
    <property type="gene ID" value="NCU08287"/>
</dbReference>
<dbReference type="GeneID" id="3877961"/>
<dbReference type="KEGG" id="ncr:NCU08287"/>
<dbReference type="VEuPathDB" id="FungiDB:NCU08287"/>
<dbReference type="HOGENOM" id="CLU_000513_2_1_1"/>
<dbReference type="InParanoid" id="Q7S8A6"/>
<dbReference type="OMA" id="WSPFNGK"/>
<dbReference type="OrthoDB" id="1924069at2759"/>
<dbReference type="UniPathway" id="UPA00070">
    <property type="reaction ID" value="UER00115"/>
</dbReference>
<dbReference type="UniPathway" id="UPA00070">
    <property type="reaction ID" value="UER00116"/>
</dbReference>
<dbReference type="Proteomes" id="UP000001805">
    <property type="component" value="Chromosome 4, Linkage Group IV"/>
</dbReference>
<dbReference type="GO" id="GO:0005737">
    <property type="term" value="C:cytoplasm"/>
    <property type="evidence" value="ECO:0000318"/>
    <property type="project" value="GO_Central"/>
</dbReference>
<dbReference type="GO" id="GO:0005829">
    <property type="term" value="C:cytosol"/>
    <property type="evidence" value="ECO:0000318"/>
    <property type="project" value="GO_Central"/>
</dbReference>
<dbReference type="GO" id="GO:0005634">
    <property type="term" value="C:nucleus"/>
    <property type="evidence" value="ECO:0007669"/>
    <property type="project" value="UniProtKB-SubCell"/>
</dbReference>
<dbReference type="GO" id="GO:0016597">
    <property type="term" value="F:amino acid binding"/>
    <property type="evidence" value="ECO:0007669"/>
    <property type="project" value="InterPro"/>
</dbReference>
<dbReference type="GO" id="GO:0004070">
    <property type="term" value="F:aspartate carbamoyltransferase activity"/>
    <property type="evidence" value="ECO:0000318"/>
    <property type="project" value="GO_Central"/>
</dbReference>
<dbReference type="GO" id="GO:0005524">
    <property type="term" value="F:ATP binding"/>
    <property type="evidence" value="ECO:0007669"/>
    <property type="project" value="UniProtKB-KW"/>
</dbReference>
<dbReference type="GO" id="GO:0004088">
    <property type="term" value="F:carbamoyl-phosphate synthase (glutamine-hydrolyzing) activity"/>
    <property type="evidence" value="ECO:0007669"/>
    <property type="project" value="UniProtKB-EC"/>
</dbReference>
<dbReference type="GO" id="GO:0016787">
    <property type="term" value="F:hydrolase activity"/>
    <property type="evidence" value="ECO:0007669"/>
    <property type="project" value="UniProtKB-KW"/>
</dbReference>
<dbReference type="GO" id="GO:0046872">
    <property type="term" value="F:metal ion binding"/>
    <property type="evidence" value="ECO:0007669"/>
    <property type="project" value="UniProtKB-KW"/>
</dbReference>
<dbReference type="GO" id="GO:0006207">
    <property type="term" value="P:'de novo' pyrimidine nucleobase biosynthetic process"/>
    <property type="evidence" value="ECO:0000318"/>
    <property type="project" value="GO_Central"/>
</dbReference>
<dbReference type="GO" id="GO:0044205">
    <property type="term" value="P:'de novo' UMP biosynthetic process"/>
    <property type="evidence" value="ECO:0007669"/>
    <property type="project" value="UniProtKB-UniPathway"/>
</dbReference>
<dbReference type="GO" id="GO:0006541">
    <property type="term" value="P:glutamine metabolic process"/>
    <property type="evidence" value="ECO:0000318"/>
    <property type="project" value="GO_Central"/>
</dbReference>
<dbReference type="CDD" id="cd01744">
    <property type="entry name" value="GATase1_CPSase"/>
    <property type="match status" value="1"/>
</dbReference>
<dbReference type="CDD" id="cd01423">
    <property type="entry name" value="MGS_CPS_I_III"/>
    <property type="match status" value="1"/>
</dbReference>
<dbReference type="FunFam" id="3.40.50.1370:FF:000002">
    <property type="entry name" value="Aspartate carbamoyltransferase 2"/>
    <property type="match status" value="1"/>
</dbReference>
<dbReference type="FunFam" id="3.40.50.20:FF:000036">
    <property type="entry name" value="Aspartate carbamoyltransferase catalytic subunit"/>
    <property type="match status" value="1"/>
</dbReference>
<dbReference type="FunFam" id="3.40.50.880:FF:000025">
    <property type="entry name" value="Bifunctional pyrimidine biosynthesis protein"/>
    <property type="match status" value="1"/>
</dbReference>
<dbReference type="FunFam" id="3.40.50.1370:FF:000005">
    <property type="entry name" value="CAD protein-like isoform X1"/>
    <property type="match status" value="1"/>
</dbReference>
<dbReference type="FunFam" id="3.30.470.20:FF:000004">
    <property type="entry name" value="Carbamoyl-phosphate synthase (glutamine-hydrolyzing)"/>
    <property type="match status" value="1"/>
</dbReference>
<dbReference type="FunFam" id="3.50.30.20:FF:000002">
    <property type="entry name" value="Carbamoyl-phosphate synthase 1, mitochondrial"/>
    <property type="match status" value="1"/>
</dbReference>
<dbReference type="FunFam" id="1.10.1030.10:FF:000001">
    <property type="entry name" value="Carbamoyl-phosphate synthase large chain"/>
    <property type="match status" value="1"/>
</dbReference>
<dbReference type="FunFam" id="3.30.1490.20:FF:000001">
    <property type="entry name" value="Carbamoyl-phosphate synthase large chain"/>
    <property type="match status" value="1"/>
</dbReference>
<dbReference type="FunFam" id="3.30.470.20:FF:000001">
    <property type="entry name" value="Carbamoyl-phosphate synthase large chain"/>
    <property type="match status" value="1"/>
</dbReference>
<dbReference type="FunFam" id="3.40.50.20:FF:000002">
    <property type="entry name" value="Carbamoyl-phosphate synthase large chain"/>
    <property type="match status" value="1"/>
</dbReference>
<dbReference type="FunFam" id="3.40.50.1380:FF:000009">
    <property type="entry name" value="Carbamoyl-phosphate synthase, large subunit"/>
    <property type="match status" value="1"/>
</dbReference>
<dbReference type="Gene3D" id="3.40.50.20">
    <property type="match status" value="2"/>
</dbReference>
<dbReference type="Gene3D" id="3.40.50.880">
    <property type="match status" value="1"/>
</dbReference>
<dbReference type="Gene3D" id="3.40.50.1370">
    <property type="entry name" value="Aspartate/ornithine carbamoyltransferase"/>
    <property type="match status" value="2"/>
</dbReference>
<dbReference type="Gene3D" id="3.30.1490.20">
    <property type="entry name" value="ATP-grasp fold, A domain"/>
    <property type="match status" value="1"/>
</dbReference>
<dbReference type="Gene3D" id="3.30.470.20">
    <property type="entry name" value="ATP-grasp fold, B domain"/>
    <property type="match status" value="2"/>
</dbReference>
<dbReference type="Gene3D" id="3.50.30.20">
    <property type="entry name" value="Carbamoyl-phosphate synthase small subunit, N-terminal domain"/>
    <property type="match status" value="1"/>
</dbReference>
<dbReference type="Gene3D" id="1.10.1030.10">
    <property type="entry name" value="Carbamoyl-phosphate synthetase, large subunit oligomerisation domain"/>
    <property type="match status" value="1"/>
</dbReference>
<dbReference type="Gene3D" id="3.40.50.1380">
    <property type="entry name" value="Methylglyoxal synthase-like domain"/>
    <property type="match status" value="1"/>
</dbReference>
<dbReference type="HAMAP" id="MF_00001">
    <property type="entry name" value="Asp_carb_tr"/>
    <property type="match status" value="1"/>
</dbReference>
<dbReference type="HAMAP" id="MF_01209">
    <property type="entry name" value="CPSase_S_chain"/>
    <property type="match status" value="1"/>
</dbReference>
<dbReference type="InterPro" id="IPR006132">
    <property type="entry name" value="Asp/Orn_carbamoyltranf_P-bd"/>
</dbReference>
<dbReference type="InterPro" id="IPR006130">
    <property type="entry name" value="Asp/Orn_carbamoylTrfase"/>
</dbReference>
<dbReference type="InterPro" id="IPR036901">
    <property type="entry name" value="Asp/Orn_carbamoylTrfase_sf"/>
</dbReference>
<dbReference type="InterPro" id="IPR002082">
    <property type="entry name" value="Asp_carbamoyltransf"/>
</dbReference>
<dbReference type="InterPro" id="IPR006131">
    <property type="entry name" value="Asp_carbamoyltransf_Asp/Orn-bd"/>
</dbReference>
<dbReference type="InterPro" id="IPR011761">
    <property type="entry name" value="ATP-grasp"/>
</dbReference>
<dbReference type="InterPro" id="IPR013815">
    <property type="entry name" value="ATP_grasp_subdomain_1"/>
</dbReference>
<dbReference type="InterPro" id="IPR006275">
    <property type="entry name" value="CarbamoylP_synth_lsu"/>
</dbReference>
<dbReference type="InterPro" id="IPR005480">
    <property type="entry name" value="CarbamoylP_synth_lsu_oligo"/>
</dbReference>
<dbReference type="InterPro" id="IPR036897">
    <property type="entry name" value="CarbamoylP_synth_lsu_oligo_sf"/>
</dbReference>
<dbReference type="InterPro" id="IPR006274">
    <property type="entry name" value="CarbamoylP_synth_ssu"/>
</dbReference>
<dbReference type="InterPro" id="IPR002474">
    <property type="entry name" value="CarbamoylP_synth_ssu_N"/>
</dbReference>
<dbReference type="InterPro" id="IPR036480">
    <property type="entry name" value="CarbP_synth_ssu_N_sf"/>
</dbReference>
<dbReference type="InterPro" id="IPR005479">
    <property type="entry name" value="CbamoylP_synth_lsu-like_ATP-bd"/>
</dbReference>
<dbReference type="InterPro" id="IPR005483">
    <property type="entry name" value="CbamoylP_synth_lsu_CPSase_dom"/>
</dbReference>
<dbReference type="InterPro" id="IPR029062">
    <property type="entry name" value="Class_I_gatase-like"/>
</dbReference>
<dbReference type="InterPro" id="IPR035686">
    <property type="entry name" value="CPSase_GATase1"/>
</dbReference>
<dbReference type="InterPro" id="IPR017926">
    <property type="entry name" value="GATASE"/>
</dbReference>
<dbReference type="InterPro" id="IPR011607">
    <property type="entry name" value="MGS-like_dom"/>
</dbReference>
<dbReference type="InterPro" id="IPR036914">
    <property type="entry name" value="MGS-like_dom_sf"/>
</dbReference>
<dbReference type="InterPro" id="IPR016185">
    <property type="entry name" value="PreATP-grasp_dom_sf"/>
</dbReference>
<dbReference type="NCBIfam" id="TIGR00670">
    <property type="entry name" value="asp_carb_tr"/>
    <property type="match status" value="1"/>
</dbReference>
<dbReference type="NCBIfam" id="TIGR01369">
    <property type="entry name" value="CPSaseII_lrg"/>
    <property type="match status" value="1"/>
</dbReference>
<dbReference type="NCBIfam" id="TIGR01368">
    <property type="entry name" value="CPSaseIIsmall"/>
    <property type="match status" value="1"/>
</dbReference>
<dbReference type="NCBIfam" id="NF002032">
    <property type="entry name" value="PRK00856.1"/>
    <property type="match status" value="1"/>
</dbReference>
<dbReference type="NCBIfam" id="NF003671">
    <property type="entry name" value="PRK05294.1"/>
    <property type="match status" value="1"/>
</dbReference>
<dbReference type="NCBIfam" id="NF009455">
    <property type="entry name" value="PRK12815.1"/>
    <property type="match status" value="1"/>
</dbReference>
<dbReference type="NCBIfam" id="NF009475">
    <property type="entry name" value="PRK12838.1"/>
    <property type="match status" value="1"/>
</dbReference>
<dbReference type="PANTHER" id="PTHR11405:SF4">
    <property type="entry name" value="CARBAMOYL-PHOSPHATE SYNTHASE ARGININE-SPECIFIC SMALL CHAIN"/>
    <property type="match status" value="1"/>
</dbReference>
<dbReference type="PANTHER" id="PTHR11405">
    <property type="entry name" value="CARBAMOYLTRANSFERASE FAMILY MEMBER"/>
    <property type="match status" value="1"/>
</dbReference>
<dbReference type="Pfam" id="PF02786">
    <property type="entry name" value="CPSase_L_D2"/>
    <property type="match status" value="2"/>
</dbReference>
<dbReference type="Pfam" id="PF02787">
    <property type="entry name" value="CPSase_L_D3"/>
    <property type="match status" value="1"/>
</dbReference>
<dbReference type="Pfam" id="PF00988">
    <property type="entry name" value="CPSase_sm_chain"/>
    <property type="match status" value="1"/>
</dbReference>
<dbReference type="Pfam" id="PF00117">
    <property type="entry name" value="GATase"/>
    <property type="match status" value="1"/>
</dbReference>
<dbReference type="Pfam" id="PF02142">
    <property type="entry name" value="MGS"/>
    <property type="match status" value="1"/>
</dbReference>
<dbReference type="Pfam" id="PF00185">
    <property type="entry name" value="OTCace"/>
    <property type="match status" value="1"/>
</dbReference>
<dbReference type="Pfam" id="PF02729">
    <property type="entry name" value="OTCace_N"/>
    <property type="match status" value="1"/>
</dbReference>
<dbReference type="PRINTS" id="PR00100">
    <property type="entry name" value="AOTCASE"/>
</dbReference>
<dbReference type="PRINTS" id="PR00101">
    <property type="entry name" value="ATCASE"/>
</dbReference>
<dbReference type="PRINTS" id="PR00098">
    <property type="entry name" value="CPSASE"/>
</dbReference>
<dbReference type="PRINTS" id="PR00099">
    <property type="entry name" value="CPSGATASE"/>
</dbReference>
<dbReference type="SMART" id="SM01096">
    <property type="entry name" value="CPSase_L_D3"/>
    <property type="match status" value="1"/>
</dbReference>
<dbReference type="SMART" id="SM01097">
    <property type="entry name" value="CPSase_sm_chain"/>
    <property type="match status" value="1"/>
</dbReference>
<dbReference type="SMART" id="SM00851">
    <property type="entry name" value="MGS"/>
    <property type="match status" value="1"/>
</dbReference>
<dbReference type="SUPFAM" id="SSF53671">
    <property type="entry name" value="Aspartate/ornithine carbamoyltransferase"/>
    <property type="match status" value="1"/>
</dbReference>
<dbReference type="SUPFAM" id="SSF48108">
    <property type="entry name" value="Carbamoyl phosphate synthetase, large subunit connection domain"/>
    <property type="match status" value="1"/>
</dbReference>
<dbReference type="SUPFAM" id="SSF52021">
    <property type="entry name" value="Carbamoyl phosphate synthetase, small subunit N-terminal domain"/>
    <property type="match status" value="1"/>
</dbReference>
<dbReference type="SUPFAM" id="SSF52317">
    <property type="entry name" value="Class I glutamine amidotransferase-like"/>
    <property type="match status" value="1"/>
</dbReference>
<dbReference type="SUPFAM" id="SSF56059">
    <property type="entry name" value="Glutathione synthetase ATP-binding domain-like"/>
    <property type="match status" value="2"/>
</dbReference>
<dbReference type="SUPFAM" id="SSF52335">
    <property type="entry name" value="Methylglyoxal synthase-like"/>
    <property type="match status" value="1"/>
</dbReference>
<dbReference type="SUPFAM" id="SSF52440">
    <property type="entry name" value="PreATP-grasp domain"/>
    <property type="match status" value="2"/>
</dbReference>
<dbReference type="PROSITE" id="PS50975">
    <property type="entry name" value="ATP_GRASP"/>
    <property type="match status" value="2"/>
</dbReference>
<dbReference type="PROSITE" id="PS00097">
    <property type="entry name" value="CARBAMOYLTRANSFERASE"/>
    <property type="match status" value="1"/>
</dbReference>
<dbReference type="PROSITE" id="PS00866">
    <property type="entry name" value="CPSASE_1"/>
    <property type="match status" value="2"/>
</dbReference>
<dbReference type="PROSITE" id="PS00867">
    <property type="entry name" value="CPSASE_2"/>
    <property type="match status" value="2"/>
</dbReference>
<dbReference type="PROSITE" id="PS51273">
    <property type="entry name" value="GATASE_TYPE_1"/>
    <property type="match status" value="1"/>
</dbReference>
<dbReference type="PROSITE" id="PS51855">
    <property type="entry name" value="MGS"/>
    <property type="match status" value="1"/>
</dbReference>
<protein>
    <recommendedName>
        <fullName evidence="15">Multifunctional protein pyr-3</fullName>
    </recommendedName>
    <alternativeName>
        <fullName>PyrABCN</fullName>
    </alternativeName>
    <alternativeName>
        <fullName>Pyrimidine-specific carbamoyl phosphate synthase-aspartate carbamoyl transferase</fullName>
        <shortName>CPSase-ATCase</shortName>
    </alternativeName>
    <domain>
        <recommendedName>
            <fullName>Glutamine-dependent carbamoyl phosphate synthase</fullName>
            <ecNumber>6.3.5.5</ecNumber>
        </recommendedName>
        <alternativeName>
            <fullName>Carbamoyl phosphate synthase P</fullName>
            <shortName>CPS-P</shortName>
            <shortName>CPS-pyr</shortName>
            <shortName>CPSase P</shortName>
        </alternativeName>
        <alternativeName>
            <fullName>Pyrimidine-specific carbamoyl phosphate synthase</fullName>
        </alternativeName>
    </domain>
    <domain>
        <recommendedName>
            <fullName>Glutamine amidotransferase</fullName>
            <shortName>GATase</shortName>
            <shortName>GLNase</shortName>
            <ecNumber>3.5.1.2</ecNumber>
        </recommendedName>
    </domain>
    <domain>
        <recommendedName>
            <fullName>Ammonium-dependent carbamoyl phosphate synthase</fullName>
            <shortName>CPS</shortName>
            <shortName>CPSase</shortName>
            <ecNumber>6.3.4.16</ecNumber>
        </recommendedName>
        <alternativeName>
            <fullName>Carbon dioxide:ammonia ligase (ADP-forming, carbamate-phosphorylating)</fullName>
        </alternativeName>
    </domain>
    <domain>
        <recommendedName>
            <fullName>Aspartate carbamoyltransferase</fullName>
            <shortName>ATCase</shortName>
            <ecNumber>2.1.3.2</ecNumber>
        </recommendedName>
        <alternativeName>
            <fullName>Aspartate transcarbamylase</fullName>
        </alternativeName>
        <alternativeName>
            <fullName>Carbamoylphosphate:L-aspartate carbamoyltransferase</fullName>
        </alternativeName>
    </domain>
</protein>
<reference key="1">
    <citation type="journal article" date="2003" name="Nature">
        <title>The genome sequence of the filamentous fungus Neurospora crassa.</title>
        <authorList>
            <person name="Galagan J.E."/>
            <person name="Calvo S.E."/>
            <person name="Borkovich K.A."/>
            <person name="Selker E.U."/>
            <person name="Read N.D."/>
            <person name="Jaffe D.B."/>
            <person name="FitzHugh W."/>
            <person name="Ma L.-J."/>
            <person name="Smirnov S."/>
            <person name="Purcell S."/>
            <person name="Rehman B."/>
            <person name="Elkins T."/>
            <person name="Engels R."/>
            <person name="Wang S."/>
            <person name="Nielsen C.B."/>
            <person name="Butler J."/>
            <person name="Endrizzi M."/>
            <person name="Qui D."/>
            <person name="Ianakiev P."/>
            <person name="Bell-Pedersen D."/>
            <person name="Nelson M.A."/>
            <person name="Werner-Washburne M."/>
            <person name="Selitrennikoff C.P."/>
            <person name="Kinsey J.A."/>
            <person name="Braun E.L."/>
            <person name="Zelter A."/>
            <person name="Schulte U."/>
            <person name="Kothe G.O."/>
            <person name="Jedd G."/>
            <person name="Mewes H.-W."/>
            <person name="Staben C."/>
            <person name="Marcotte E."/>
            <person name="Greenberg D."/>
            <person name="Roy A."/>
            <person name="Foley K."/>
            <person name="Naylor J."/>
            <person name="Stange-Thomann N."/>
            <person name="Barrett R."/>
            <person name="Gnerre S."/>
            <person name="Kamal M."/>
            <person name="Kamvysselis M."/>
            <person name="Mauceli E.W."/>
            <person name="Bielke C."/>
            <person name="Rudd S."/>
            <person name="Frishman D."/>
            <person name="Krystofova S."/>
            <person name="Rasmussen C."/>
            <person name="Metzenberg R.L."/>
            <person name="Perkins D.D."/>
            <person name="Kroken S."/>
            <person name="Cogoni C."/>
            <person name="Macino G."/>
            <person name="Catcheside D.E.A."/>
            <person name="Li W."/>
            <person name="Pratt R.J."/>
            <person name="Osmani S.A."/>
            <person name="DeSouza C.P.C."/>
            <person name="Glass N.L."/>
            <person name="Orbach M.J."/>
            <person name="Berglund J.A."/>
            <person name="Voelker R."/>
            <person name="Yarden O."/>
            <person name="Plamann M."/>
            <person name="Seiler S."/>
            <person name="Dunlap J.C."/>
            <person name="Radford A."/>
            <person name="Aramayo R."/>
            <person name="Natvig D.O."/>
            <person name="Alex L.A."/>
            <person name="Mannhaupt G."/>
            <person name="Ebbole D.J."/>
            <person name="Freitag M."/>
            <person name="Paulsen I."/>
            <person name="Sachs M.S."/>
            <person name="Lander E.S."/>
            <person name="Nusbaum C."/>
            <person name="Birren B.W."/>
        </authorList>
    </citation>
    <scope>NUCLEOTIDE SEQUENCE [LARGE SCALE GENOMIC DNA]</scope>
    <source>
        <strain>ATCC 24698 / 74-OR23-1A / CBS 708.71 / DSM 1257 / FGSC 987</strain>
    </source>
</reference>
<reference key="2">
    <citation type="book" date="1967" name="Organisational biosynthesis">
        <title>Channeling in Neurospora metabolism.</title>
        <editorList>
            <person name="Vogel H.J."/>
            <person name="Lamper L.O."/>
            <person name="Bryson V."/>
        </editorList>
        <authorList>
            <person name="Davis R.H."/>
        </authorList>
    </citation>
    <scope>FUNCTION</scope>
</reference>
<reference key="3">
    <citation type="journal article" date="1969" name="J. Bacteriol.">
        <title>Pyrimidine synthesis in Neurospora crassa: gene-enzyme relationships.</title>
        <authorList>
            <person name="Caroline D.F."/>
        </authorList>
    </citation>
    <scope>DOMAIN</scope>
</reference>
<reference key="4">
    <citation type="journal article" date="1970" name="Biochemistry">
        <title>Copurification of pyrimidine-specific carbamyl phosphate synthetase and aspartate transcarbamylase of Neurospora crassa.</title>
        <authorList>
            <person name="Williams L.G."/>
            <person name="Bernhardt S."/>
            <person name="Davis R.H."/>
        </authorList>
    </citation>
    <scope>FUNCTION</scope>
    <scope>CATALYTIC ACTIVITY</scope>
</reference>
<reference key="5">
    <citation type="journal article" date="1970" name="J. Bacteriol.">
        <title>Pyrimidine-specific carbamyl phosphate synthetase in Neurospora crassa.</title>
        <authorList>
            <person name="Williams L.G."/>
            <person name="Davis R.H."/>
        </authorList>
    </citation>
    <scope>FUNCTION</scope>
    <scope>CATALYTIC ACTIVITY</scope>
    <scope>BIOPHYSICOCHEMICAL PROPERTIES</scope>
    <scope>ACTIVITY REGULATION</scope>
    <scope>INDUCTION</scope>
</reference>
<reference key="6">
    <citation type="journal article" date="1971" name="J. Biol. Chem.">
        <title>Evidence for two discrete carbamyl phosphate pools in Neurospora.</title>
        <authorList>
            <person name="Williams L.G."/>
            <person name="Bernhardt S.A."/>
            <person name="Davis R.H."/>
        </authorList>
    </citation>
    <scope>FUNCTION</scope>
</reference>
<reference key="7">
    <citation type="journal article" date="1972" name="Proc. Natl. Acad. Sci. U.S.A.">
        <title>Carbamoyl phosphate compartmentation in Neurospora: histochemical localization of aspartate and ornithine transcarbamoylases.</title>
        <authorList>
            <person name="Bernhardt S.A."/>
            <person name="Davis R.H."/>
        </authorList>
    </citation>
    <scope>SUBCELLULAR LOCATION</scope>
</reference>
<reference key="8">
    <citation type="journal article" date="1972" name="Science">
        <title>Metabolite distribution in cells.</title>
        <authorList>
            <person name="Davis R.H."/>
        </authorList>
    </citation>
    <scope>FUNCTION</scope>
</reference>
<reference key="9">
    <citation type="journal article" date="1973" name="Science">
        <authorList>
            <person name="Davis R.H."/>
        </authorList>
    </citation>
    <scope>ERRATUM OF PUBMED:5085981</scope>
</reference>
<reference key="10">
    <citation type="journal article" date="1976" name="Mol. Gen. Genet.">
        <title>Glutamine utilization in both the arginine-specific and pyrimidine-specific carbamoyl phosphate synthase enzymes of Neurospora crassa.</title>
        <authorList>
            <person name="Makoff A.J."/>
            <person name="Radford A."/>
        </authorList>
    </citation>
    <scope>FUNCTION</scope>
    <scope>CATALYTIC ACTIVITY</scope>
</reference>
<reference key="11">
    <citation type="journal article" date="1978" name="Methods Enzymol.">
        <title>Carbamyl-phosphate synthetase (glutamine): aspartate carbamyltransferase of Neurospora.</title>
        <authorList>
            <person name="Williams L.G."/>
            <person name="Davis R.H."/>
        </authorList>
    </citation>
    <scope>FUNCTION</scope>
</reference>
<reference key="12">
    <citation type="journal article" date="1978" name="Mol. Gen. Genet.">
        <title>A possible model for the structure of the Neurospora carbamoyl phosphate synthase-aspartate carbamoyl transferase complex enzyme.</title>
        <authorList>
            <person name="Makoff A.J."/>
            <person name="Buxton F.P."/>
            <person name="Radford A."/>
        </authorList>
    </citation>
    <scope>FUNCTION</scope>
</reference>
<reference key="13">
    <citation type="journal article" date="1982" name="Biochim. Biophys. Acta">
        <title>Investigation of binding sites in the complex pyrimidine-specific carbamoyl-phosphate synthetase/aspartate carbamoyltransferase enzyme of Neurospora crassa.</title>
        <authorList>
            <person name="Rigby D.J."/>
            <person name="Radford A."/>
        </authorList>
    </citation>
    <scope>FUNCTION</scope>
</reference>
<proteinExistence type="evidence at protein level"/>
<organism>
    <name type="scientific">Neurospora crassa (strain ATCC 24698 / 74-OR23-1A / CBS 708.71 / DSM 1257 / FGSC 987)</name>
    <dbReference type="NCBI Taxonomy" id="367110"/>
    <lineage>
        <taxon>Eukaryota</taxon>
        <taxon>Fungi</taxon>
        <taxon>Dikarya</taxon>
        <taxon>Ascomycota</taxon>
        <taxon>Pezizomycotina</taxon>
        <taxon>Sordariomycetes</taxon>
        <taxon>Sordariomycetidae</taxon>
        <taxon>Sordariales</taxon>
        <taxon>Sordariaceae</taxon>
        <taxon>Neurospora</taxon>
    </lineage>
</organism>